<accession>B7UJ50</accession>
<comment type="similarity">
    <text evidence="1">Belongs to the UPF0213 family.</text>
</comment>
<evidence type="ECO:0000255" key="1">
    <source>
        <dbReference type="HAMAP-Rule" id="MF_01029"/>
    </source>
</evidence>
<proteinExistence type="inferred from homology"/>
<reference key="1">
    <citation type="journal article" date="2009" name="J. Bacteriol.">
        <title>Complete genome sequence and comparative genome analysis of enteropathogenic Escherichia coli O127:H6 strain E2348/69.</title>
        <authorList>
            <person name="Iguchi A."/>
            <person name="Thomson N.R."/>
            <person name="Ogura Y."/>
            <person name="Saunders D."/>
            <person name="Ooka T."/>
            <person name="Henderson I.R."/>
            <person name="Harris D."/>
            <person name="Asadulghani M."/>
            <person name="Kurokawa K."/>
            <person name="Dean P."/>
            <person name="Kenny B."/>
            <person name="Quail M.A."/>
            <person name="Thurston S."/>
            <person name="Dougan G."/>
            <person name="Hayashi T."/>
            <person name="Parkhill J."/>
            <person name="Frankel G."/>
        </authorList>
    </citation>
    <scope>NUCLEOTIDE SEQUENCE [LARGE SCALE GENOMIC DNA]</scope>
    <source>
        <strain>E2348/69 / EPEC</strain>
    </source>
</reference>
<feature type="chain" id="PRO_1000149381" description="UPF0213 protein YhbQ">
    <location>
        <begin position="1"/>
        <end position="100"/>
    </location>
</feature>
<feature type="domain" description="GIY-YIG" evidence="1">
    <location>
        <begin position="2"/>
        <end position="77"/>
    </location>
</feature>
<name>YHBQ_ECO27</name>
<organism>
    <name type="scientific">Escherichia coli O127:H6 (strain E2348/69 / EPEC)</name>
    <dbReference type="NCBI Taxonomy" id="574521"/>
    <lineage>
        <taxon>Bacteria</taxon>
        <taxon>Pseudomonadati</taxon>
        <taxon>Pseudomonadota</taxon>
        <taxon>Gammaproteobacteria</taxon>
        <taxon>Enterobacterales</taxon>
        <taxon>Enterobacteriaceae</taxon>
        <taxon>Escherichia</taxon>
    </lineage>
</organism>
<keyword id="KW-1185">Reference proteome</keyword>
<dbReference type="EMBL" id="FM180568">
    <property type="protein sequence ID" value="CAS10984.1"/>
    <property type="molecule type" value="Genomic_DNA"/>
</dbReference>
<dbReference type="RefSeq" id="WP_000189331.1">
    <property type="nucleotide sequence ID" value="NC_011601.1"/>
</dbReference>
<dbReference type="SMR" id="B7UJ50"/>
<dbReference type="KEGG" id="ecg:E2348C_3436"/>
<dbReference type="HOGENOM" id="CLU_135650_0_1_6"/>
<dbReference type="Proteomes" id="UP000008205">
    <property type="component" value="Chromosome"/>
</dbReference>
<dbReference type="CDD" id="cd10456">
    <property type="entry name" value="GIY-YIG_UPF0213"/>
    <property type="match status" value="1"/>
</dbReference>
<dbReference type="FunFam" id="3.40.1440.10:FF:000002">
    <property type="entry name" value="UPF0213 protein YhbQ"/>
    <property type="match status" value="1"/>
</dbReference>
<dbReference type="Gene3D" id="3.40.1440.10">
    <property type="entry name" value="GIY-YIG endonuclease"/>
    <property type="match status" value="1"/>
</dbReference>
<dbReference type="HAMAP" id="MF_01029">
    <property type="entry name" value="UPF0213"/>
    <property type="match status" value="1"/>
</dbReference>
<dbReference type="InterPro" id="IPR000305">
    <property type="entry name" value="GIY-YIG_endonuc"/>
</dbReference>
<dbReference type="InterPro" id="IPR035901">
    <property type="entry name" value="GIY-YIG_endonuc_sf"/>
</dbReference>
<dbReference type="InterPro" id="IPR050190">
    <property type="entry name" value="UPF0213_domain"/>
</dbReference>
<dbReference type="InterPro" id="IPR022992">
    <property type="entry name" value="UPF0213_GIY-YIG_endonuc"/>
</dbReference>
<dbReference type="PANTHER" id="PTHR34477">
    <property type="entry name" value="UPF0213 PROTEIN YHBQ"/>
    <property type="match status" value="1"/>
</dbReference>
<dbReference type="PANTHER" id="PTHR34477:SF1">
    <property type="entry name" value="UPF0213 PROTEIN YHBQ"/>
    <property type="match status" value="1"/>
</dbReference>
<dbReference type="Pfam" id="PF01541">
    <property type="entry name" value="GIY-YIG"/>
    <property type="match status" value="1"/>
</dbReference>
<dbReference type="SMART" id="SM00465">
    <property type="entry name" value="GIYc"/>
    <property type="match status" value="1"/>
</dbReference>
<dbReference type="SUPFAM" id="SSF82771">
    <property type="entry name" value="GIY-YIG endonuclease"/>
    <property type="match status" value="1"/>
</dbReference>
<dbReference type="PROSITE" id="PS50164">
    <property type="entry name" value="GIY_YIG"/>
    <property type="match status" value="1"/>
</dbReference>
<protein>
    <recommendedName>
        <fullName evidence="1">UPF0213 protein YhbQ</fullName>
    </recommendedName>
</protein>
<sequence length="100" mass="11310">MTPWFLYLIRTADNKLYTGITTDVERRYQQHQSGKGAKALRGKGELTLAFSAPVGNRSLALRAEYRVKQLTKRQKERLVAEGAVFAELLNSLQTPEIKSD</sequence>
<gene>
    <name evidence="1" type="primary">yhbQ</name>
    <name type="ordered locus">E2348C_3436</name>
</gene>